<feature type="chain" id="PRO_0000185433" description="Sphingolipid delta(4)-desaturase">
    <location>
        <begin position="1"/>
        <end position="362"/>
    </location>
</feature>
<feature type="transmembrane region" description="Helical" evidence="3">
    <location>
        <begin position="60"/>
        <end position="80"/>
    </location>
</feature>
<feature type="transmembrane region" description="Helical" evidence="3">
    <location>
        <begin position="90"/>
        <end position="110"/>
    </location>
</feature>
<feature type="transmembrane region" description="Helical" evidence="3">
    <location>
        <begin position="121"/>
        <end position="143"/>
    </location>
</feature>
<feature type="transmembrane region" description="Helical" evidence="3">
    <location>
        <begin position="169"/>
        <end position="189"/>
    </location>
</feature>
<feature type="transmembrane region" description="Helical" evidence="3">
    <location>
        <begin position="200"/>
        <end position="220"/>
    </location>
</feature>
<feature type="transmembrane region" description="Helical" evidence="3">
    <location>
        <begin position="228"/>
        <end position="248"/>
    </location>
</feature>
<feature type="region of interest" description="Disordered" evidence="4">
    <location>
        <begin position="1"/>
        <end position="20"/>
    </location>
</feature>
<feature type="short sequence motif" description="Histidine box-1" evidence="7">
    <location>
        <begin position="110"/>
        <end position="114"/>
    </location>
</feature>
<feature type="short sequence motif" description="Histidine box-2" evidence="7">
    <location>
        <begin position="147"/>
        <end position="151"/>
    </location>
</feature>
<feature type="short sequence motif" description="Histidine box-3" evidence="7">
    <location>
        <begin position="290"/>
        <end position="294"/>
    </location>
</feature>
<feature type="compositionally biased region" description="Low complexity" evidence="4">
    <location>
        <begin position="1"/>
        <end position="10"/>
    </location>
</feature>
<evidence type="ECO:0000250" key="1">
    <source>
        <dbReference type="UniProtKB" id="C4R613"/>
    </source>
</evidence>
<evidence type="ECO:0000250" key="2">
    <source>
        <dbReference type="UniProtKB" id="Q5AJX2"/>
    </source>
</evidence>
<evidence type="ECO:0000255" key="3"/>
<evidence type="ECO:0000256" key="4">
    <source>
        <dbReference type="SAM" id="MobiDB-lite"/>
    </source>
</evidence>
<evidence type="ECO:0000269" key="5">
    <source>
    </source>
</evidence>
<evidence type="ECO:0000303" key="6">
    <source>
    </source>
</evidence>
<evidence type="ECO:0000305" key="7"/>
<evidence type="ECO:0000305" key="8">
    <source>
    </source>
</evidence>
<evidence type="ECO:0000312" key="9">
    <source>
        <dbReference type="PomBase" id="SPBC3B8.07c"/>
    </source>
</evidence>
<sequence>MAESTATTTAVPPPAEESWNADSEDVHQFYWTYTEEPHKSRRAAILKAHPEIASLNGYEPLTKWIVLGVVSLQFTCAYLLSQSSLLSWKFFLTAYFIGAFCNQNLFLAIHELSHNLGFKKTLYNRAYCLFANLPVGAPFAASFRPYHMEHHAYQGVDGMDTDLPTRAELILFDNVLGKAFFCTFQLLFYAFRPLVVRRLPFTLMHFWNIIVQFSFDYLVVRYVGWRALAYFFMSSFLAGSLHPTAGHFLSEHYNMTRTRLIASGPGKETPLETFSYYGPLNFFVYNAGYHIEHHDFPYVAWTRIGKVRELAPEFYDNIPDCKSWCGIIYQFITDSNVGMWCRVKRKQKHADIPTKSMHLHVS</sequence>
<comment type="function">
    <text evidence="5">Delta(4)-fatty-acid desaturase which introduces a double bond at the 4-position in the long-chain base (LCB) of ceramides. Required for sphingosine biosynthesis.</text>
</comment>
<comment type="catalytic activity">
    <reaction evidence="5">
        <text>an N-acylsphinganine + 2 Fe(II)-[cytochrome b5] + O2 + 2 H(+) = an N-acylsphing-4-enine + 2 Fe(III)-[cytochrome b5] + 2 H2O</text>
        <dbReference type="Rhea" id="RHEA:46544"/>
        <dbReference type="Rhea" id="RHEA-COMP:10438"/>
        <dbReference type="Rhea" id="RHEA-COMP:10439"/>
        <dbReference type="ChEBI" id="CHEBI:15377"/>
        <dbReference type="ChEBI" id="CHEBI:15378"/>
        <dbReference type="ChEBI" id="CHEBI:15379"/>
        <dbReference type="ChEBI" id="CHEBI:29033"/>
        <dbReference type="ChEBI" id="CHEBI:29034"/>
        <dbReference type="ChEBI" id="CHEBI:31488"/>
        <dbReference type="ChEBI" id="CHEBI:52639"/>
        <dbReference type="EC" id="1.14.19.17"/>
    </reaction>
</comment>
<comment type="pathway">
    <text evidence="8">Lipid metabolism; sphingolipid metabolism.</text>
</comment>
<comment type="subcellular location">
    <subcellularLocation>
        <location evidence="7">Membrane</location>
        <topology evidence="7">Multi-pass membrane protein</topology>
    </subcellularLocation>
</comment>
<comment type="disruption phenotype">
    <text evidence="5">Results in the dramatic reduction in the endogenous levels of sphingosine.</text>
</comment>
<comment type="similarity">
    <text evidence="7">Belongs to the fatty acid desaturase type 1 family. DEGS subfamily.</text>
</comment>
<protein>
    <recommendedName>
        <fullName evidence="2">Sphingolipid delta(4)-desaturase</fullName>
        <ecNumber evidence="5">1.14.19.17</ecNumber>
    </recommendedName>
    <alternativeName>
        <fullName evidence="1">Delta 4-(E)-sphingolipid desaturase</fullName>
    </alternativeName>
    <alternativeName>
        <fullName evidence="6">Dihydroceramide desaturase</fullName>
    </alternativeName>
</protein>
<accession>O59715</accession>
<keyword id="KW-0443">Lipid metabolism</keyword>
<keyword id="KW-0472">Membrane</keyword>
<keyword id="KW-0560">Oxidoreductase</keyword>
<keyword id="KW-1185">Reference proteome</keyword>
<keyword id="KW-0746">Sphingolipid metabolism</keyword>
<keyword id="KW-0812">Transmembrane</keyword>
<keyword id="KW-1133">Transmembrane helix</keyword>
<name>DEGS_SCHPO</name>
<organism>
    <name type="scientific">Schizosaccharomyces pombe (strain 972 / ATCC 24843)</name>
    <name type="common">Fission yeast</name>
    <dbReference type="NCBI Taxonomy" id="284812"/>
    <lineage>
        <taxon>Eukaryota</taxon>
        <taxon>Fungi</taxon>
        <taxon>Dikarya</taxon>
        <taxon>Ascomycota</taxon>
        <taxon>Taphrinomycotina</taxon>
        <taxon>Schizosaccharomycetes</taxon>
        <taxon>Schizosaccharomycetales</taxon>
        <taxon>Schizosaccharomycetaceae</taxon>
        <taxon>Schizosaccharomyces</taxon>
    </lineage>
</organism>
<gene>
    <name type="primary">dsd1</name>
    <name evidence="9" type="ORF">SPBC3B8.07c</name>
</gene>
<reference key="1">
    <citation type="journal article" date="2003" name="FEBS Lett.">
        <title>The dihydroceramide desaturase is not essential for cell viability in Schizosaccharomyces pombe.</title>
        <authorList>
            <person name="Garton S."/>
            <person name="Michaelson L.V."/>
            <person name="Beaudoin F."/>
            <person name="Beale M.H."/>
            <person name="Napier J.A."/>
        </authorList>
    </citation>
    <scope>NUCLEOTIDE SEQUENCE [GENOMIC DNA]</scope>
    <scope>FUNCTION</scope>
    <scope>CATALYTIC ACTIVITY</scope>
    <scope>PATHWAY</scope>
    <scope>DISRUPTION PHENOTYPE</scope>
</reference>
<reference key="2">
    <citation type="journal article" date="2002" name="Nature">
        <title>The genome sequence of Schizosaccharomyces pombe.</title>
        <authorList>
            <person name="Wood V."/>
            <person name="Gwilliam R."/>
            <person name="Rajandream M.A."/>
            <person name="Lyne M.H."/>
            <person name="Lyne R."/>
            <person name="Stewart A."/>
            <person name="Sgouros J.G."/>
            <person name="Peat N."/>
            <person name="Hayles J."/>
            <person name="Baker S.G."/>
            <person name="Basham D."/>
            <person name="Bowman S."/>
            <person name="Brooks K."/>
            <person name="Brown D."/>
            <person name="Brown S."/>
            <person name="Chillingworth T."/>
            <person name="Churcher C.M."/>
            <person name="Collins M."/>
            <person name="Connor R."/>
            <person name="Cronin A."/>
            <person name="Davis P."/>
            <person name="Feltwell T."/>
            <person name="Fraser A."/>
            <person name="Gentles S."/>
            <person name="Goble A."/>
            <person name="Hamlin N."/>
            <person name="Harris D.E."/>
            <person name="Hidalgo J."/>
            <person name="Hodgson G."/>
            <person name="Holroyd S."/>
            <person name="Hornsby T."/>
            <person name="Howarth S."/>
            <person name="Huckle E.J."/>
            <person name="Hunt S."/>
            <person name="Jagels K."/>
            <person name="James K.D."/>
            <person name="Jones L."/>
            <person name="Jones M."/>
            <person name="Leather S."/>
            <person name="McDonald S."/>
            <person name="McLean J."/>
            <person name="Mooney P."/>
            <person name="Moule S."/>
            <person name="Mungall K.L."/>
            <person name="Murphy L.D."/>
            <person name="Niblett D."/>
            <person name="Odell C."/>
            <person name="Oliver K."/>
            <person name="O'Neil S."/>
            <person name="Pearson D."/>
            <person name="Quail M.A."/>
            <person name="Rabbinowitsch E."/>
            <person name="Rutherford K.M."/>
            <person name="Rutter S."/>
            <person name="Saunders D."/>
            <person name="Seeger K."/>
            <person name="Sharp S."/>
            <person name="Skelton J."/>
            <person name="Simmonds M.N."/>
            <person name="Squares R."/>
            <person name="Squares S."/>
            <person name="Stevens K."/>
            <person name="Taylor K."/>
            <person name="Taylor R.G."/>
            <person name="Tivey A."/>
            <person name="Walsh S.V."/>
            <person name="Warren T."/>
            <person name="Whitehead S."/>
            <person name="Woodward J.R."/>
            <person name="Volckaert G."/>
            <person name="Aert R."/>
            <person name="Robben J."/>
            <person name="Grymonprez B."/>
            <person name="Weltjens I."/>
            <person name="Vanstreels E."/>
            <person name="Rieger M."/>
            <person name="Schaefer M."/>
            <person name="Mueller-Auer S."/>
            <person name="Gabel C."/>
            <person name="Fuchs M."/>
            <person name="Duesterhoeft A."/>
            <person name="Fritzc C."/>
            <person name="Holzer E."/>
            <person name="Moestl D."/>
            <person name="Hilbert H."/>
            <person name="Borzym K."/>
            <person name="Langer I."/>
            <person name="Beck A."/>
            <person name="Lehrach H."/>
            <person name="Reinhardt R."/>
            <person name="Pohl T.M."/>
            <person name="Eger P."/>
            <person name="Zimmermann W."/>
            <person name="Wedler H."/>
            <person name="Wambutt R."/>
            <person name="Purnelle B."/>
            <person name="Goffeau A."/>
            <person name="Cadieu E."/>
            <person name="Dreano S."/>
            <person name="Gloux S."/>
            <person name="Lelaure V."/>
            <person name="Mottier S."/>
            <person name="Galibert F."/>
            <person name="Aves S.J."/>
            <person name="Xiang Z."/>
            <person name="Hunt C."/>
            <person name="Moore K."/>
            <person name="Hurst S.M."/>
            <person name="Lucas M."/>
            <person name="Rochet M."/>
            <person name="Gaillardin C."/>
            <person name="Tallada V.A."/>
            <person name="Garzon A."/>
            <person name="Thode G."/>
            <person name="Daga R.R."/>
            <person name="Cruzado L."/>
            <person name="Jimenez J."/>
            <person name="Sanchez M."/>
            <person name="del Rey F."/>
            <person name="Benito J."/>
            <person name="Dominguez A."/>
            <person name="Revuelta J.L."/>
            <person name="Moreno S."/>
            <person name="Armstrong J."/>
            <person name="Forsburg S.L."/>
            <person name="Cerutti L."/>
            <person name="Lowe T."/>
            <person name="McCombie W.R."/>
            <person name="Paulsen I."/>
            <person name="Potashkin J."/>
            <person name="Shpakovski G.V."/>
            <person name="Ussery D."/>
            <person name="Barrell B.G."/>
            <person name="Nurse P."/>
        </authorList>
    </citation>
    <scope>NUCLEOTIDE SEQUENCE [LARGE SCALE GENOMIC DNA]</scope>
    <source>
        <strain>972 / ATCC 24843</strain>
    </source>
</reference>
<dbReference type="EC" id="1.14.19.17" evidence="5"/>
<dbReference type="EMBL" id="CU329671">
    <property type="protein sequence ID" value="CAA18296.1"/>
    <property type="molecule type" value="Genomic_DNA"/>
</dbReference>
<dbReference type="PIR" id="T40333">
    <property type="entry name" value="T40333"/>
</dbReference>
<dbReference type="RefSeq" id="NP_596407.1">
    <property type="nucleotide sequence ID" value="NM_001022326.2"/>
</dbReference>
<dbReference type="BioGRID" id="277534">
    <property type="interactions" value="13"/>
</dbReference>
<dbReference type="FunCoup" id="O59715">
    <property type="interactions" value="97"/>
</dbReference>
<dbReference type="STRING" id="284812.O59715"/>
<dbReference type="SwissLipids" id="SLP:000001867"/>
<dbReference type="iPTMnet" id="O59715"/>
<dbReference type="PaxDb" id="4896-SPBC3B8.07c.1"/>
<dbReference type="EnsemblFungi" id="SPBC3B8.07c.1">
    <property type="protein sequence ID" value="SPBC3B8.07c.1:pep"/>
    <property type="gene ID" value="SPBC3B8.07c"/>
</dbReference>
<dbReference type="GeneID" id="2541019"/>
<dbReference type="KEGG" id="spo:2541019"/>
<dbReference type="PomBase" id="SPBC3B8.07c">
    <property type="gene designation" value="dsd1"/>
</dbReference>
<dbReference type="VEuPathDB" id="FungiDB:SPBC3B8.07c"/>
<dbReference type="eggNOG" id="KOG2987">
    <property type="taxonomic scope" value="Eukaryota"/>
</dbReference>
<dbReference type="HOGENOM" id="CLU_032156_0_1_1"/>
<dbReference type="InParanoid" id="O59715"/>
<dbReference type="OMA" id="GATCNQN"/>
<dbReference type="PhylomeDB" id="O59715"/>
<dbReference type="BRENDA" id="1.14.19.17">
    <property type="organism ID" value="5613"/>
</dbReference>
<dbReference type="Reactome" id="R-SPO-1660661">
    <property type="pathway name" value="Sphingolipid de novo biosynthesis"/>
</dbReference>
<dbReference type="Reactome" id="R-SPO-6798695">
    <property type="pathway name" value="Neutrophil degranulation"/>
</dbReference>
<dbReference type="UniPathway" id="UPA00222"/>
<dbReference type="PRO" id="PR:O59715"/>
<dbReference type="Proteomes" id="UP000002485">
    <property type="component" value="Chromosome II"/>
</dbReference>
<dbReference type="GO" id="GO:0005783">
    <property type="term" value="C:endoplasmic reticulum"/>
    <property type="evidence" value="ECO:0007005"/>
    <property type="project" value="PomBase"/>
</dbReference>
<dbReference type="GO" id="GO:0016020">
    <property type="term" value="C:membrane"/>
    <property type="evidence" value="ECO:0000266"/>
    <property type="project" value="PomBase"/>
</dbReference>
<dbReference type="GO" id="GO:0042284">
    <property type="term" value="F:sphingolipid delta-4 desaturase activity"/>
    <property type="evidence" value="ECO:0000314"/>
    <property type="project" value="PomBase"/>
</dbReference>
<dbReference type="GO" id="GO:0046513">
    <property type="term" value="P:ceramide biosynthetic process"/>
    <property type="evidence" value="ECO:0000318"/>
    <property type="project" value="GO_Central"/>
</dbReference>
<dbReference type="GO" id="GO:0030148">
    <property type="term" value="P:sphingolipid biosynthetic process"/>
    <property type="evidence" value="ECO:0000315"/>
    <property type="project" value="PomBase"/>
</dbReference>
<dbReference type="GO" id="GO:0046512">
    <property type="term" value="P:sphingosine biosynthetic process"/>
    <property type="evidence" value="ECO:0000314"/>
    <property type="project" value="PomBase"/>
</dbReference>
<dbReference type="CDD" id="cd03508">
    <property type="entry name" value="Delta4-sphingolipid-FADS-like"/>
    <property type="match status" value="1"/>
</dbReference>
<dbReference type="InterPro" id="IPR011388">
    <property type="entry name" value="DES1/DES2"/>
</dbReference>
<dbReference type="InterPro" id="IPR005804">
    <property type="entry name" value="FA_desaturase_dom"/>
</dbReference>
<dbReference type="InterPro" id="IPR013866">
    <property type="entry name" value="Sphingolipid_d4-desaturase_N"/>
</dbReference>
<dbReference type="PANTHER" id="PTHR12879">
    <property type="entry name" value="SPHINGOLIPID DELTA 4 DESATURASE/C-4 HYDROXYLASE PROTEIN DES2"/>
    <property type="match status" value="1"/>
</dbReference>
<dbReference type="PANTHER" id="PTHR12879:SF8">
    <property type="entry name" value="SPHINGOLIPID DELTA(4)-DESATURASE DES1"/>
    <property type="match status" value="1"/>
</dbReference>
<dbReference type="Pfam" id="PF00487">
    <property type="entry name" value="FA_desaturase"/>
    <property type="match status" value="1"/>
</dbReference>
<dbReference type="Pfam" id="PF08557">
    <property type="entry name" value="Lipid_DES"/>
    <property type="match status" value="1"/>
</dbReference>
<dbReference type="PIRSF" id="PIRSF017228">
    <property type="entry name" value="Sphnglp_dlt4_des"/>
    <property type="match status" value="1"/>
</dbReference>
<dbReference type="SMART" id="SM01269">
    <property type="entry name" value="Lipid_DES"/>
    <property type="match status" value="1"/>
</dbReference>
<proteinExistence type="evidence at protein level"/>